<organism>
    <name type="scientific">Mycolicibacterium smegmatis (strain ATCC 700084 / mc(2)155)</name>
    <name type="common">Mycobacterium smegmatis</name>
    <dbReference type="NCBI Taxonomy" id="246196"/>
    <lineage>
        <taxon>Bacteria</taxon>
        <taxon>Bacillati</taxon>
        <taxon>Actinomycetota</taxon>
        <taxon>Actinomycetes</taxon>
        <taxon>Mycobacteriales</taxon>
        <taxon>Mycobacteriaceae</taxon>
        <taxon>Mycolicibacterium</taxon>
    </lineage>
</organism>
<name>RPOA_MYCS2</name>
<gene>
    <name evidence="1" type="primary">rpoA</name>
    <name type="ordered locus">MSMEG_1524</name>
    <name type="ordered locus">MSMEI_1488</name>
</gene>
<reference key="1">
    <citation type="submission" date="2006-10" db="EMBL/GenBank/DDBJ databases">
        <authorList>
            <person name="Fleischmann R.D."/>
            <person name="Dodson R.J."/>
            <person name="Haft D.H."/>
            <person name="Merkel J.S."/>
            <person name="Nelson W.C."/>
            <person name="Fraser C.M."/>
        </authorList>
    </citation>
    <scope>NUCLEOTIDE SEQUENCE [LARGE SCALE GENOMIC DNA]</scope>
    <source>
        <strain>ATCC 700084 / mc(2)155</strain>
    </source>
</reference>
<reference key="2">
    <citation type="journal article" date="2007" name="Genome Biol.">
        <title>Interrupted coding sequences in Mycobacterium smegmatis: authentic mutations or sequencing errors?</title>
        <authorList>
            <person name="Deshayes C."/>
            <person name="Perrodou E."/>
            <person name="Gallien S."/>
            <person name="Euphrasie D."/>
            <person name="Schaeffer C."/>
            <person name="Van-Dorsselaer A."/>
            <person name="Poch O."/>
            <person name="Lecompte O."/>
            <person name="Reyrat J.-M."/>
        </authorList>
    </citation>
    <scope>NUCLEOTIDE SEQUENCE [LARGE SCALE GENOMIC DNA]</scope>
    <source>
        <strain>ATCC 700084 / mc(2)155</strain>
    </source>
</reference>
<reference key="3">
    <citation type="journal article" date="2009" name="Genome Res.">
        <title>Ortho-proteogenomics: multiple proteomes investigation through orthology and a new MS-based protocol.</title>
        <authorList>
            <person name="Gallien S."/>
            <person name="Perrodou E."/>
            <person name="Carapito C."/>
            <person name="Deshayes C."/>
            <person name="Reyrat J.-M."/>
            <person name="Van Dorsselaer A."/>
            <person name="Poch O."/>
            <person name="Schaeffer C."/>
            <person name="Lecompte O."/>
        </authorList>
    </citation>
    <scope>NUCLEOTIDE SEQUENCE [LARGE SCALE GENOMIC DNA]</scope>
    <source>
        <strain>ATCC 700084 / mc(2)155</strain>
    </source>
</reference>
<reference key="4">
    <citation type="journal article" date="2010" name="Microbiology">
        <title>Role of an RNA polymerase interacting protein, MsRbpA, from Mycobacterium smegmatis in phenotypic tolerance to rifampicin.</title>
        <authorList>
            <person name="Dey A."/>
            <person name="Verma A.K."/>
            <person name="Chatterji D."/>
        </authorList>
    </citation>
    <scope>FUNCTION</scope>
    <scope>SUBUNIT</scope>
    <source>
        <strain>ATCC 700084 / mc(2)155</strain>
    </source>
</reference>
<sequence length="350" mass="37920">MLISQRPTLSEETVAENRSRFVIEPLEPGFGYTLGNSLRRTLLSSIPGAAVTSIRIDGVLHEFTTVPGVKEDVTDIILNLKGLVVSSDDDEPVTMYLRKQGPGVVTAGDIVPPAGVTVHNPDMHIATLNDKGKLEVELVVERGRGYVPAVQNKASGAEIGRIPVDSIYSPVLKVTYKVEATRVEQRTDFDKLIIDVETKNSISPRDALASAGGTLVELFGLARELNADSEHIEIGPSPAEADHIASFALPIDDLDLTVRSYNCLKREGVHTVGELVARTESDLLDIRNFGQKSIDEVKIKLHQLGLSLKDSPATFDPSEVAGYDAATGTWTSDAGYDLDDNQDYAETEQL</sequence>
<evidence type="ECO:0000255" key="1">
    <source>
        <dbReference type="HAMAP-Rule" id="MF_00059"/>
    </source>
</evidence>
<evidence type="ECO:0000256" key="2">
    <source>
        <dbReference type="SAM" id="MobiDB-lite"/>
    </source>
</evidence>
<evidence type="ECO:0000269" key="3">
    <source>
    </source>
</evidence>
<evidence type="ECO:0007829" key="4">
    <source>
        <dbReference type="PDB" id="5TW1"/>
    </source>
</evidence>
<evidence type="ECO:0007829" key="5">
    <source>
        <dbReference type="PDB" id="5VI8"/>
    </source>
</evidence>
<evidence type="ECO:0007829" key="6">
    <source>
        <dbReference type="PDB" id="6VVT"/>
    </source>
</evidence>
<evidence type="ECO:0007829" key="7">
    <source>
        <dbReference type="PDB" id="6YXU"/>
    </source>
</evidence>
<evidence type="ECO:0007829" key="8">
    <source>
        <dbReference type="PDB" id="6YYS"/>
    </source>
</evidence>
<evidence type="ECO:0007829" key="9">
    <source>
        <dbReference type="PDB" id="8QN8"/>
    </source>
</evidence>
<evidence type="ECO:0007829" key="10">
    <source>
        <dbReference type="PDB" id="8QTI"/>
    </source>
</evidence>
<accession>A0QSL8</accession>
<accession>I7G472</accession>
<protein>
    <recommendedName>
        <fullName evidence="1">DNA-directed RNA polymerase subunit alpha</fullName>
        <shortName evidence="1">RNAP subunit alpha</shortName>
        <ecNumber evidence="1">2.7.7.6</ecNumber>
    </recommendedName>
    <alternativeName>
        <fullName evidence="1">RNA polymerase subunit alpha</fullName>
    </alternativeName>
    <alternativeName>
        <fullName evidence="1">Transcriptase subunit alpha</fullName>
    </alternativeName>
</protein>
<proteinExistence type="evidence at protein level"/>
<comment type="function">
    <text evidence="1 3">DNA-dependent RNA polymerase catalyzes the transcription of DNA into RNA using the four ribonucleoside triphosphates as substrates.</text>
</comment>
<comment type="catalytic activity">
    <reaction evidence="1">
        <text>RNA(n) + a ribonucleoside 5'-triphosphate = RNA(n+1) + diphosphate</text>
        <dbReference type="Rhea" id="RHEA:21248"/>
        <dbReference type="Rhea" id="RHEA-COMP:14527"/>
        <dbReference type="Rhea" id="RHEA-COMP:17342"/>
        <dbReference type="ChEBI" id="CHEBI:33019"/>
        <dbReference type="ChEBI" id="CHEBI:61557"/>
        <dbReference type="ChEBI" id="CHEBI:140395"/>
        <dbReference type="EC" id="2.7.7.6"/>
    </reaction>
</comment>
<comment type="subunit">
    <text evidence="1 3">Homodimer. The RNAP catalytic core consists of 2 alpha, 1 beta, 1 beta' and 1 omega subunit. When a sigma factor is associated with the core the holoenzyme is formed, which can initiate transcription.</text>
</comment>
<comment type="domain">
    <text evidence="1">The N-terminal domain is essential for RNAP assembly and basal transcription, whereas the C-terminal domain is involved in interaction with transcriptional regulators and with upstream promoter elements.</text>
</comment>
<comment type="similarity">
    <text evidence="1">Belongs to the RNA polymerase alpha chain family.</text>
</comment>
<feature type="chain" id="PRO_0000296835" description="DNA-directed RNA polymerase subunit alpha">
    <location>
        <begin position="1"/>
        <end position="350"/>
    </location>
</feature>
<feature type="region of interest" description="Alpha N-terminal domain (alpha-NTD)" evidence="1">
    <location>
        <begin position="1"/>
        <end position="226"/>
    </location>
</feature>
<feature type="region of interest" description="Alpha C-terminal domain (alpha-CTD)" evidence="1">
    <location>
        <begin position="241"/>
        <end position="350"/>
    </location>
</feature>
<feature type="region of interest" description="Disordered" evidence="2">
    <location>
        <begin position="328"/>
        <end position="350"/>
    </location>
</feature>
<feature type="compositionally biased region" description="Acidic residues" evidence="2">
    <location>
        <begin position="336"/>
        <end position="350"/>
    </location>
</feature>
<feature type="strand" evidence="4">
    <location>
        <begin position="8"/>
        <end position="10"/>
    </location>
</feature>
<feature type="strand" evidence="4">
    <location>
        <begin position="14"/>
        <end position="26"/>
    </location>
</feature>
<feature type="helix" evidence="4">
    <location>
        <begin position="31"/>
        <end position="45"/>
    </location>
</feature>
<feature type="strand" evidence="4">
    <location>
        <begin position="48"/>
        <end position="58"/>
    </location>
</feature>
<feature type="strand" evidence="6">
    <location>
        <begin position="60"/>
        <end position="63"/>
    </location>
</feature>
<feature type="strand" evidence="5">
    <location>
        <begin position="69"/>
        <end position="71"/>
    </location>
</feature>
<feature type="helix" evidence="4">
    <location>
        <begin position="73"/>
        <end position="81"/>
    </location>
</feature>
<feature type="strand" evidence="4">
    <location>
        <begin position="85"/>
        <end position="87"/>
    </location>
</feature>
<feature type="strand" evidence="7">
    <location>
        <begin position="89"/>
        <end position="91"/>
    </location>
</feature>
<feature type="strand" evidence="4">
    <location>
        <begin position="93"/>
        <end position="106"/>
    </location>
</feature>
<feature type="helix" evidence="4">
    <location>
        <begin position="107"/>
        <end position="109"/>
    </location>
</feature>
<feature type="strand" evidence="4">
    <location>
        <begin position="116"/>
        <end position="119"/>
    </location>
</feature>
<feature type="strand" evidence="4">
    <location>
        <begin position="124"/>
        <end position="128"/>
    </location>
</feature>
<feature type="strand" evidence="4">
    <location>
        <begin position="133"/>
        <end position="143"/>
    </location>
</feature>
<feature type="strand" evidence="4">
    <location>
        <begin position="145"/>
        <end position="147"/>
    </location>
</feature>
<feature type="turn" evidence="4">
    <location>
        <begin position="152"/>
        <end position="154"/>
    </location>
</feature>
<feature type="turn" evidence="6">
    <location>
        <begin position="158"/>
        <end position="160"/>
    </location>
</feature>
<feature type="strand" evidence="9">
    <location>
        <begin position="161"/>
        <end position="163"/>
    </location>
</feature>
<feature type="strand" evidence="4">
    <location>
        <begin position="166"/>
        <end position="168"/>
    </location>
</feature>
<feature type="strand" evidence="4">
    <location>
        <begin position="171"/>
        <end position="180"/>
    </location>
</feature>
<feature type="turn" evidence="6">
    <location>
        <begin position="183"/>
        <end position="185"/>
    </location>
</feature>
<feature type="strand" evidence="4">
    <location>
        <begin position="190"/>
        <end position="198"/>
    </location>
</feature>
<feature type="strand" evidence="4">
    <location>
        <begin position="200"/>
        <end position="202"/>
    </location>
</feature>
<feature type="helix" evidence="4">
    <location>
        <begin position="204"/>
        <end position="218"/>
    </location>
</feature>
<feature type="helix" evidence="8">
    <location>
        <begin position="220"/>
        <end position="222"/>
    </location>
</feature>
<feature type="strand" evidence="10">
    <location>
        <begin position="227"/>
        <end position="229"/>
    </location>
</feature>
<feature type="helix" evidence="4">
    <location>
        <begin position="252"/>
        <end position="254"/>
    </location>
</feature>
<feature type="helix" evidence="4">
    <location>
        <begin position="258"/>
        <end position="267"/>
    </location>
</feature>
<feature type="helix" evidence="4">
    <location>
        <begin position="272"/>
        <end position="277"/>
    </location>
</feature>
<feature type="helix" evidence="4">
    <location>
        <begin position="280"/>
        <end position="284"/>
    </location>
</feature>
<feature type="helix" evidence="4">
    <location>
        <begin position="291"/>
        <end position="302"/>
    </location>
</feature>
<keyword id="KW-0002">3D-structure</keyword>
<keyword id="KW-0240">DNA-directed RNA polymerase</keyword>
<keyword id="KW-0548">Nucleotidyltransferase</keyword>
<keyword id="KW-1185">Reference proteome</keyword>
<keyword id="KW-0804">Transcription</keyword>
<keyword id="KW-0808">Transferase</keyword>
<dbReference type="EC" id="2.7.7.6" evidence="1"/>
<dbReference type="EMBL" id="CP000480">
    <property type="protein sequence ID" value="ABK71739.1"/>
    <property type="molecule type" value="Genomic_DNA"/>
</dbReference>
<dbReference type="EMBL" id="CP001663">
    <property type="protein sequence ID" value="AFP37961.1"/>
    <property type="molecule type" value="Genomic_DNA"/>
</dbReference>
<dbReference type="RefSeq" id="WP_003892912.1">
    <property type="nucleotide sequence ID" value="NZ_SIJM01000016.1"/>
</dbReference>
<dbReference type="RefSeq" id="YP_885906.1">
    <property type="nucleotide sequence ID" value="NC_008596.1"/>
</dbReference>
<dbReference type="PDB" id="5TW1">
    <property type="method" value="X-ray"/>
    <property type="resolution" value="2.76 A"/>
    <property type="chains" value="A/B/T=1-350"/>
</dbReference>
<dbReference type="PDB" id="5VI5">
    <property type="method" value="X-ray"/>
    <property type="resolution" value="3.20 A"/>
    <property type="chains" value="A/B=1-350"/>
</dbReference>
<dbReference type="PDB" id="5VI8">
    <property type="method" value="X-ray"/>
    <property type="resolution" value="2.76 A"/>
    <property type="chains" value="A/B=1-350, T=251-350"/>
</dbReference>
<dbReference type="PDB" id="6CCE">
    <property type="method" value="X-ray"/>
    <property type="resolution" value="3.05 A"/>
    <property type="chains" value="A/B=1-350"/>
</dbReference>
<dbReference type="PDB" id="6CCV">
    <property type="method" value="X-ray"/>
    <property type="resolution" value="3.05 A"/>
    <property type="chains" value="A/B/T=1-350"/>
</dbReference>
<dbReference type="PDB" id="6DCF">
    <property type="method" value="X-ray"/>
    <property type="resolution" value="3.45 A"/>
    <property type="chains" value="A/B=1-350"/>
</dbReference>
<dbReference type="PDB" id="6EYD">
    <property type="method" value="EM"/>
    <property type="resolution" value="4.20 A"/>
    <property type="chains" value="A/B=1-350"/>
</dbReference>
<dbReference type="PDB" id="6F6W">
    <property type="method" value="EM"/>
    <property type="resolution" value="3.80 A"/>
    <property type="chains" value="A/B=1-350"/>
</dbReference>
<dbReference type="PDB" id="6VVS">
    <property type="method" value="X-ray"/>
    <property type="resolution" value="3.11 A"/>
    <property type="chains" value="A/B/T=1-350"/>
</dbReference>
<dbReference type="PDB" id="6VVT">
    <property type="method" value="X-ray"/>
    <property type="resolution" value="2.90 A"/>
    <property type="chains" value="A/B=1-350"/>
</dbReference>
<dbReference type="PDB" id="6VVV">
    <property type="method" value="X-ray"/>
    <property type="resolution" value="3.20 A"/>
    <property type="chains" value="A/B/T=1-350"/>
</dbReference>
<dbReference type="PDB" id="6YXU">
    <property type="method" value="EM"/>
    <property type="resolution" value="3.08 A"/>
    <property type="chains" value="A/B=1-350"/>
</dbReference>
<dbReference type="PDB" id="6YYS">
    <property type="method" value="EM"/>
    <property type="resolution" value="3.08 A"/>
    <property type="chains" value="A/B=1-350"/>
</dbReference>
<dbReference type="PDB" id="6Z11">
    <property type="method" value="EM"/>
    <property type="resolution" value="3.36 A"/>
    <property type="chains" value="A/B=1-350"/>
</dbReference>
<dbReference type="PDB" id="7P5X">
    <property type="method" value="EM"/>
    <property type="resolution" value="3.20 A"/>
    <property type="chains" value="AA/AB=1-350"/>
</dbReference>
<dbReference type="PDB" id="8Q3I">
    <property type="method" value="EM"/>
    <property type="resolution" value="3.11 A"/>
    <property type="chains" value="A/B=1-350"/>
</dbReference>
<dbReference type="PDB" id="8QN8">
    <property type="method" value="EM"/>
    <property type="resolution" value="3.14 A"/>
    <property type="chains" value="A/B=1-350"/>
</dbReference>
<dbReference type="PDB" id="8QTI">
    <property type="method" value="EM"/>
    <property type="resolution" value="3.09 A"/>
    <property type="chains" value="A/B=1-350"/>
</dbReference>
<dbReference type="PDB" id="8QU6">
    <property type="method" value="EM"/>
    <property type="resolution" value="3.45 A"/>
    <property type="chains" value="A/B=1-350"/>
</dbReference>
<dbReference type="PDB" id="8R2M">
    <property type="method" value="EM"/>
    <property type="resolution" value="3.44 A"/>
    <property type="chains" value="A/B=1-350"/>
</dbReference>
<dbReference type="PDB" id="8R3M">
    <property type="method" value="EM"/>
    <property type="resolution" value="3.49 A"/>
    <property type="chains" value="A/B=1-350"/>
</dbReference>
<dbReference type="PDB" id="8R6P">
    <property type="method" value="EM"/>
    <property type="resolution" value="3.16 A"/>
    <property type="chains" value="A/B=1-350"/>
</dbReference>
<dbReference type="PDB" id="8R6R">
    <property type="method" value="EM"/>
    <property type="resolution" value="3.89 A"/>
    <property type="chains" value="A/B=1-350"/>
</dbReference>
<dbReference type="PDB" id="9FNE">
    <property type="method" value="EM"/>
    <property type="resolution" value="4.00 A"/>
    <property type="chains" value="A/B=1-350"/>
</dbReference>
<dbReference type="PDBsum" id="5TW1"/>
<dbReference type="PDBsum" id="5VI5"/>
<dbReference type="PDBsum" id="5VI8"/>
<dbReference type="PDBsum" id="6CCE"/>
<dbReference type="PDBsum" id="6CCV"/>
<dbReference type="PDBsum" id="6DCF"/>
<dbReference type="PDBsum" id="6EYD"/>
<dbReference type="PDBsum" id="6F6W"/>
<dbReference type="PDBsum" id="6VVS"/>
<dbReference type="PDBsum" id="6VVT"/>
<dbReference type="PDBsum" id="6VVV"/>
<dbReference type="PDBsum" id="6YXU"/>
<dbReference type="PDBsum" id="6YYS"/>
<dbReference type="PDBsum" id="6Z11"/>
<dbReference type="PDBsum" id="7P5X"/>
<dbReference type="PDBsum" id="8Q3I"/>
<dbReference type="PDBsum" id="8QN8"/>
<dbReference type="PDBsum" id="8QTI"/>
<dbReference type="PDBsum" id="8QU6"/>
<dbReference type="PDBsum" id="8R2M"/>
<dbReference type="PDBsum" id="8R3M"/>
<dbReference type="PDBsum" id="8R6P"/>
<dbReference type="PDBsum" id="8R6R"/>
<dbReference type="PDBsum" id="9FNE"/>
<dbReference type="EMDB" id="EMD-10996"/>
<dbReference type="EMDB" id="EMD-11004"/>
<dbReference type="EMDB" id="EMD-11026"/>
<dbReference type="EMDB" id="EMD-13205"/>
<dbReference type="EMDB" id="EMD-18128"/>
<dbReference type="EMDB" id="EMD-18511"/>
<dbReference type="EMDB" id="EMD-18650"/>
<dbReference type="EMDB" id="EMD-18656"/>
<dbReference type="EMDB" id="EMD-18851"/>
<dbReference type="EMDB" id="EMD-18873"/>
<dbReference type="EMDB" id="EMD-18956"/>
<dbReference type="EMDB" id="EMD-18959"/>
<dbReference type="EMDB" id="EMD-3983"/>
<dbReference type="EMDB" id="EMD-4192"/>
<dbReference type="EMDB" id="EMD-50589"/>
<dbReference type="EMDB" id="EMD-50591"/>
<dbReference type="SMR" id="A0QSL8"/>
<dbReference type="IntAct" id="A0QSL8">
    <property type="interactions" value="2"/>
</dbReference>
<dbReference type="STRING" id="246196.MSMEG_1524"/>
<dbReference type="PaxDb" id="246196-MSMEI_1488"/>
<dbReference type="KEGG" id="msb:LJ00_07615"/>
<dbReference type="KEGG" id="msg:MSMEI_1488"/>
<dbReference type="KEGG" id="msm:MSMEG_1524"/>
<dbReference type="PATRIC" id="fig|246196.19.peg.1509"/>
<dbReference type="eggNOG" id="COG0202">
    <property type="taxonomic scope" value="Bacteria"/>
</dbReference>
<dbReference type="OrthoDB" id="9805706at2"/>
<dbReference type="BRENDA" id="2.7.7.6">
    <property type="organism ID" value="3512"/>
</dbReference>
<dbReference type="Proteomes" id="UP000000757">
    <property type="component" value="Chromosome"/>
</dbReference>
<dbReference type="Proteomes" id="UP000006158">
    <property type="component" value="Chromosome"/>
</dbReference>
<dbReference type="GO" id="GO:0005737">
    <property type="term" value="C:cytoplasm"/>
    <property type="evidence" value="ECO:0007669"/>
    <property type="project" value="UniProtKB-ARBA"/>
</dbReference>
<dbReference type="GO" id="GO:0000428">
    <property type="term" value="C:DNA-directed RNA polymerase complex"/>
    <property type="evidence" value="ECO:0007669"/>
    <property type="project" value="UniProtKB-KW"/>
</dbReference>
<dbReference type="GO" id="GO:0003677">
    <property type="term" value="F:DNA binding"/>
    <property type="evidence" value="ECO:0007669"/>
    <property type="project" value="UniProtKB-UniRule"/>
</dbReference>
<dbReference type="GO" id="GO:0003899">
    <property type="term" value="F:DNA-directed RNA polymerase activity"/>
    <property type="evidence" value="ECO:0007669"/>
    <property type="project" value="UniProtKB-UniRule"/>
</dbReference>
<dbReference type="GO" id="GO:0046983">
    <property type="term" value="F:protein dimerization activity"/>
    <property type="evidence" value="ECO:0007669"/>
    <property type="project" value="InterPro"/>
</dbReference>
<dbReference type="GO" id="GO:0006351">
    <property type="term" value="P:DNA-templated transcription"/>
    <property type="evidence" value="ECO:0007669"/>
    <property type="project" value="UniProtKB-UniRule"/>
</dbReference>
<dbReference type="CDD" id="cd06928">
    <property type="entry name" value="RNAP_alpha_NTD"/>
    <property type="match status" value="1"/>
</dbReference>
<dbReference type="FunFam" id="1.10.150.20:FF:000001">
    <property type="entry name" value="DNA-directed RNA polymerase subunit alpha"/>
    <property type="match status" value="1"/>
</dbReference>
<dbReference type="FunFam" id="2.170.120.12:FF:000001">
    <property type="entry name" value="DNA-directed RNA polymerase subunit alpha"/>
    <property type="match status" value="1"/>
</dbReference>
<dbReference type="Gene3D" id="1.10.150.20">
    <property type="entry name" value="5' to 3' exonuclease, C-terminal subdomain"/>
    <property type="match status" value="1"/>
</dbReference>
<dbReference type="Gene3D" id="2.170.120.12">
    <property type="entry name" value="DNA-directed RNA polymerase, insert domain"/>
    <property type="match status" value="1"/>
</dbReference>
<dbReference type="Gene3D" id="3.30.1360.10">
    <property type="entry name" value="RNA polymerase, RBP11-like subunit"/>
    <property type="match status" value="1"/>
</dbReference>
<dbReference type="HAMAP" id="MF_00059">
    <property type="entry name" value="RNApol_bact_RpoA"/>
    <property type="match status" value="1"/>
</dbReference>
<dbReference type="InterPro" id="IPR011262">
    <property type="entry name" value="DNA-dir_RNA_pol_insert"/>
</dbReference>
<dbReference type="InterPro" id="IPR011263">
    <property type="entry name" value="DNA-dir_RNA_pol_RpoA/D/Rpb3"/>
</dbReference>
<dbReference type="InterPro" id="IPR011773">
    <property type="entry name" value="DNA-dir_RpoA"/>
</dbReference>
<dbReference type="InterPro" id="IPR036603">
    <property type="entry name" value="RBP11-like"/>
</dbReference>
<dbReference type="InterPro" id="IPR011260">
    <property type="entry name" value="RNAP_asu_C"/>
</dbReference>
<dbReference type="InterPro" id="IPR036643">
    <property type="entry name" value="RNApol_insert_sf"/>
</dbReference>
<dbReference type="NCBIfam" id="NF003513">
    <property type="entry name" value="PRK05182.1-2"/>
    <property type="match status" value="1"/>
</dbReference>
<dbReference type="NCBIfam" id="NF003514">
    <property type="entry name" value="PRK05182.1-4"/>
    <property type="match status" value="1"/>
</dbReference>
<dbReference type="NCBIfam" id="NF003519">
    <property type="entry name" value="PRK05182.2-5"/>
    <property type="match status" value="1"/>
</dbReference>
<dbReference type="NCBIfam" id="TIGR02027">
    <property type="entry name" value="rpoA"/>
    <property type="match status" value="1"/>
</dbReference>
<dbReference type="Pfam" id="PF01000">
    <property type="entry name" value="RNA_pol_A_bac"/>
    <property type="match status" value="1"/>
</dbReference>
<dbReference type="Pfam" id="PF03118">
    <property type="entry name" value="RNA_pol_A_CTD"/>
    <property type="match status" value="1"/>
</dbReference>
<dbReference type="Pfam" id="PF01193">
    <property type="entry name" value="RNA_pol_L"/>
    <property type="match status" value="1"/>
</dbReference>
<dbReference type="SMART" id="SM00662">
    <property type="entry name" value="RPOLD"/>
    <property type="match status" value="1"/>
</dbReference>
<dbReference type="SUPFAM" id="SSF47789">
    <property type="entry name" value="C-terminal domain of RNA polymerase alpha subunit"/>
    <property type="match status" value="1"/>
</dbReference>
<dbReference type="SUPFAM" id="SSF56553">
    <property type="entry name" value="Insert subdomain of RNA polymerase alpha subunit"/>
    <property type="match status" value="1"/>
</dbReference>
<dbReference type="SUPFAM" id="SSF55257">
    <property type="entry name" value="RBP11-like subunits of RNA polymerase"/>
    <property type="match status" value="1"/>
</dbReference>